<gene>
    <name evidence="1" type="primary">NS</name>
</gene>
<sequence length="121" mass="14350">MDSNTVSSFQDILMRMSKMQLGSSSEDLNGMITQFESLKLYRDSLGKAVMRMGDLHSLQNRNGKWREQLSQKFEEIRWLIEEVRHRLKVTENSFEQITFMQALQLLLEVEQEIRTFSFQLI</sequence>
<reference key="1">
    <citation type="journal article" date="2005" name="Virology">
        <title>Evolution of H9N2 influenza viruses from domestic poultry in Mainland China.</title>
        <authorList>
            <person name="Li C."/>
            <person name="Yu K."/>
            <person name="Tian G."/>
            <person name="Yu D."/>
            <person name="Liu L."/>
            <person name="Jing B."/>
            <person name="Ping J."/>
            <person name="Chen H."/>
        </authorList>
    </citation>
    <scope>NUCLEOTIDE SEQUENCE [GENOMIC RNA]</scope>
</reference>
<reference key="2">
    <citation type="journal article" date="2006" name="Science">
        <title>Large-scale sequence analysis of avian influenza isolates.</title>
        <authorList>
            <person name="Obenauer J.C."/>
            <person name="Denson J."/>
            <person name="Mehta P.K."/>
            <person name="Su X."/>
            <person name="Mukatira S."/>
            <person name="Finkelstein D.B."/>
            <person name="Xu X."/>
            <person name="Wang J."/>
            <person name="Ma J."/>
            <person name="Fan Y."/>
            <person name="Rakestraw K.M."/>
            <person name="Webster R.G."/>
            <person name="Hoffmann E."/>
            <person name="Krauss S."/>
            <person name="Zheng J."/>
            <person name="Zhang Z."/>
            <person name="Naeve C.W."/>
        </authorList>
    </citation>
    <scope>NUCLEOTIDE SEQUENCE [GENOMIC RNA]</scope>
</reference>
<evidence type="ECO:0000255" key="1">
    <source>
        <dbReference type="HAMAP-Rule" id="MF_04067"/>
    </source>
</evidence>
<comment type="function">
    <text evidence="1">Mediates the nuclear export of encapsidated genomic RNAs (ribonucleoproteins, RNPs). Acts as an adapter between viral RNPs complexes and the nuclear export machinery of the cell. Possesses no intrinsic RNA-binding activity, but includes a C-terminal M1-binding domain. This domain is believed to allow recognition of RNPs bound to the protein M1. Since protein M1 is not available in large quantities before late stages of infection, such an indirect recognition mechanism probably ensures that genomic RNPs are not exported from the host nucleus until sufficient quantities of viral mRNA and progeny genomic RNA have been synthesized. Furthermore, the RNPs enter the host cytoplasm only when associated with the M1 protein that is necessary to guide them to the plasma membrane. May down-regulate viral RNA synthesis when overproduced.</text>
</comment>
<comment type="subunit">
    <text evidence="1">Interacts with protein M1. May interact with host nucleoporin RAB/HRB and exportin XPO1/CRM1.</text>
</comment>
<comment type="subcellular location">
    <subcellularLocation>
        <location evidence="1">Virion</location>
    </subcellularLocation>
    <subcellularLocation>
        <location evidence="1">Host nucleus</location>
    </subcellularLocation>
</comment>
<comment type="alternative products">
    <event type="alternative splicing"/>
    <isoform>
        <id>Q3SBF1-1</id>
        <name>NEP</name>
        <name>NS2</name>
        <sequence type="displayed"/>
    </isoform>
    <isoform>
        <id>Q3SBF0-1</id>
        <name>NS1</name>
        <sequence type="external"/>
    </isoform>
</comment>
<comment type="similarity">
    <text evidence="1">Belongs to the influenza viruses NEP family.</text>
</comment>
<protein>
    <recommendedName>
        <fullName evidence="1">Nuclear export protein</fullName>
        <shortName evidence="1">NEP</shortName>
    </recommendedName>
    <alternativeName>
        <fullName evidence="1">Non-structural protein 2</fullName>
        <shortName evidence="1">NS2</shortName>
    </alternativeName>
</protein>
<name>NEP_I66A1</name>
<dbReference type="EMBL" id="DQ067441">
    <property type="protein sequence ID" value="AAY52687.1"/>
    <property type="molecule type" value="Genomic_RNA"/>
</dbReference>
<dbReference type="EMBL" id="CY014667">
    <property type="protein sequence ID" value="ABI84529.1"/>
    <property type="molecule type" value="Genomic_RNA"/>
</dbReference>
<dbReference type="SMR" id="Q3SBF1"/>
<dbReference type="Proteomes" id="UP000115522">
    <property type="component" value="Genome"/>
</dbReference>
<dbReference type="GO" id="GO:0042025">
    <property type="term" value="C:host cell nucleus"/>
    <property type="evidence" value="ECO:0007669"/>
    <property type="project" value="UniProtKB-SubCell"/>
</dbReference>
<dbReference type="GO" id="GO:0044423">
    <property type="term" value="C:virion component"/>
    <property type="evidence" value="ECO:0007669"/>
    <property type="project" value="UniProtKB-UniRule"/>
</dbReference>
<dbReference type="GO" id="GO:0039675">
    <property type="term" value="P:exit of virus from host cell nucleus through nuclear pore"/>
    <property type="evidence" value="ECO:0007669"/>
    <property type="project" value="UniProtKB-UniRule"/>
</dbReference>
<dbReference type="Gene3D" id="1.10.287.230">
    <property type="match status" value="1"/>
</dbReference>
<dbReference type="Gene3D" id="1.10.287.10">
    <property type="entry name" value="S15/NS1, RNA-binding"/>
    <property type="match status" value="1"/>
</dbReference>
<dbReference type="HAMAP" id="MF_04067">
    <property type="entry name" value="INFV_NEP"/>
    <property type="match status" value="1"/>
</dbReference>
<dbReference type="InterPro" id="IPR000968">
    <property type="entry name" value="Flu_NS2"/>
</dbReference>
<dbReference type="Pfam" id="PF00601">
    <property type="entry name" value="Flu_NS2"/>
    <property type="match status" value="1"/>
</dbReference>
<dbReference type="SUPFAM" id="SSF101156">
    <property type="entry name" value="Nonstructural protein ns2, Nep, M1-binding domain"/>
    <property type="match status" value="1"/>
</dbReference>
<keyword id="KW-0025">Alternative splicing</keyword>
<keyword id="KW-1048">Host nucleus</keyword>
<keyword id="KW-0945">Host-virus interaction</keyword>
<keyword id="KW-0813">Transport</keyword>
<keyword id="KW-0946">Virion</keyword>
<proteinExistence type="inferred from homology"/>
<accession>Q3SBF1</accession>
<feature type="chain" id="PRO_0000324200" description="Nuclear export protein">
    <location>
        <begin position="1"/>
        <end position="121"/>
    </location>
</feature>
<feature type="short sequence motif" description="Nuclear export signal" evidence="1">
    <location>
        <begin position="12"/>
        <end position="21"/>
    </location>
</feature>
<feature type="short sequence motif" description="Nuclear export signal" evidence="1">
    <location>
        <begin position="85"/>
        <end position="94"/>
    </location>
</feature>
<organism>
    <name type="scientific">Influenza A virus (strain A/Turkey/Wisconsin/1/1966 H9N2)</name>
    <dbReference type="NCBI Taxonomy" id="385620"/>
    <lineage>
        <taxon>Viruses</taxon>
        <taxon>Riboviria</taxon>
        <taxon>Orthornavirae</taxon>
        <taxon>Negarnaviricota</taxon>
        <taxon>Polyploviricotina</taxon>
        <taxon>Insthoviricetes</taxon>
        <taxon>Articulavirales</taxon>
        <taxon>Orthomyxoviridae</taxon>
        <taxon>Alphainfluenzavirus</taxon>
        <taxon>Alphainfluenzavirus influenzae</taxon>
        <taxon>Influenza A virus</taxon>
    </lineage>
</organism>
<organismHost>
    <name type="scientific">Aves</name>
    <dbReference type="NCBI Taxonomy" id="8782"/>
</organismHost>